<proteinExistence type="inferred from homology"/>
<organism>
    <name type="scientific">Thermoanaerobacter sp. (strain X514)</name>
    <dbReference type="NCBI Taxonomy" id="399726"/>
    <lineage>
        <taxon>Bacteria</taxon>
        <taxon>Bacillati</taxon>
        <taxon>Bacillota</taxon>
        <taxon>Clostridia</taxon>
        <taxon>Thermoanaerobacterales</taxon>
        <taxon>Thermoanaerobacteraceae</taxon>
        <taxon>Thermoanaerobacter</taxon>
    </lineage>
</organism>
<reference key="1">
    <citation type="submission" date="2008-01" db="EMBL/GenBank/DDBJ databases">
        <title>Complete sequence of Thermoanaerobacter sp. X514.</title>
        <authorList>
            <consortium name="US DOE Joint Genome Institute"/>
            <person name="Copeland A."/>
            <person name="Lucas S."/>
            <person name="Lapidus A."/>
            <person name="Barry K."/>
            <person name="Glavina del Rio T."/>
            <person name="Dalin E."/>
            <person name="Tice H."/>
            <person name="Pitluck S."/>
            <person name="Bruce D."/>
            <person name="Goodwin L."/>
            <person name="Saunders E."/>
            <person name="Brettin T."/>
            <person name="Detter J.C."/>
            <person name="Han C."/>
            <person name="Schmutz J."/>
            <person name="Larimer F."/>
            <person name="Land M."/>
            <person name="Hauser L."/>
            <person name="Kyrpides N."/>
            <person name="Kim E."/>
            <person name="Hemme C."/>
            <person name="Fields M.W."/>
            <person name="He Z."/>
            <person name="Zhou J."/>
            <person name="Richardson P."/>
        </authorList>
    </citation>
    <scope>NUCLEOTIDE SEQUENCE [LARGE SCALE GENOMIC DNA]</scope>
    <source>
        <strain>X514</strain>
    </source>
</reference>
<accession>B0K5N3</accession>
<feature type="chain" id="PRO_0000345351" description="tRNA uridine 5-carboxymethylaminomethyl modification enzyme MnmG">
    <location>
        <begin position="1"/>
        <end position="633"/>
    </location>
</feature>
<feature type="binding site" evidence="1">
    <location>
        <begin position="14"/>
        <end position="19"/>
    </location>
    <ligand>
        <name>FAD</name>
        <dbReference type="ChEBI" id="CHEBI:57692"/>
    </ligand>
</feature>
<feature type="binding site" evidence="1">
    <location>
        <begin position="273"/>
        <end position="287"/>
    </location>
    <ligand>
        <name>NAD(+)</name>
        <dbReference type="ChEBI" id="CHEBI:57540"/>
    </ligand>
</feature>
<keyword id="KW-0963">Cytoplasm</keyword>
<keyword id="KW-0274">FAD</keyword>
<keyword id="KW-0285">Flavoprotein</keyword>
<keyword id="KW-0520">NAD</keyword>
<keyword id="KW-0819">tRNA processing</keyword>
<name>MNMG_THEPX</name>
<comment type="function">
    <text evidence="1">NAD-binding protein involved in the addition of a carboxymethylaminomethyl (cmnm) group at the wobble position (U34) of certain tRNAs, forming tRNA-cmnm(5)s(2)U34.</text>
</comment>
<comment type="cofactor">
    <cofactor evidence="1">
        <name>FAD</name>
        <dbReference type="ChEBI" id="CHEBI:57692"/>
    </cofactor>
</comment>
<comment type="subunit">
    <text evidence="1">Homodimer. Heterotetramer of two MnmE and two MnmG subunits.</text>
</comment>
<comment type="subcellular location">
    <subcellularLocation>
        <location evidence="1">Cytoplasm</location>
    </subcellularLocation>
</comment>
<comment type="similarity">
    <text evidence="1">Belongs to the MnmG family.</text>
</comment>
<protein>
    <recommendedName>
        <fullName evidence="1">tRNA uridine 5-carboxymethylaminomethyl modification enzyme MnmG</fullName>
    </recommendedName>
    <alternativeName>
        <fullName evidence="1">Glucose-inhibited division protein A</fullName>
    </alternativeName>
</protein>
<evidence type="ECO:0000255" key="1">
    <source>
        <dbReference type="HAMAP-Rule" id="MF_00129"/>
    </source>
</evidence>
<dbReference type="EMBL" id="CP000923">
    <property type="protein sequence ID" value="ABY93667.1"/>
    <property type="molecule type" value="Genomic_DNA"/>
</dbReference>
<dbReference type="RefSeq" id="WP_003867415.1">
    <property type="nucleotide sequence ID" value="NC_010320.1"/>
</dbReference>
<dbReference type="SMR" id="B0K5N3"/>
<dbReference type="KEGG" id="tex:Teth514_2408"/>
<dbReference type="HOGENOM" id="CLU_007831_2_2_9"/>
<dbReference type="Proteomes" id="UP000002155">
    <property type="component" value="Chromosome"/>
</dbReference>
<dbReference type="GO" id="GO:0005829">
    <property type="term" value="C:cytosol"/>
    <property type="evidence" value="ECO:0007669"/>
    <property type="project" value="TreeGrafter"/>
</dbReference>
<dbReference type="GO" id="GO:0050660">
    <property type="term" value="F:flavin adenine dinucleotide binding"/>
    <property type="evidence" value="ECO:0007669"/>
    <property type="project" value="UniProtKB-UniRule"/>
</dbReference>
<dbReference type="GO" id="GO:0030488">
    <property type="term" value="P:tRNA methylation"/>
    <property type="evidence" value="ECO:0007669"/>
    <property type="project" value="TreeGrafter"/>
</dbReference>
<dbReference type="GO" id="GO:0002098">
    <property type="term" value="P:tRNA wobble uridine modification"/>
    <property type="evidence" value="ECO:0007669"/>
    <property type="project" value="InterPro"/>
</dbReference>
<dbReference type="FunFam" id="1.10.10.1800:FF:000001">
    <property type="entry name" value="tRNA uridine 5-carboxymethylaminomethyl modification enzyme MnmG"/>
    <property type="match status" value="1"/>
</dbReference>
<dbReference type="FunFam" id="1.10.150.570:FF:000001">
    <property type="entry name" value="tRNA uridine 5-carboxymethylaminomethyl modification enzyme MnmG"/>
    <property type="match status" value="1"/>
</dbReference>
<dbReference type="FunFam" id="3.50.50.60:FF:000002">
    <property type="entry name" value="tRNA uridine 5-carboxymethylaminomethyl modification enzyme MnmG"/>
    <property type="match status" value="1"/>
</dbReference>
<dbReference type="Gene3D" id="3.50.50.60">
    <property type="entry name" value="FAD/NAD(P)-binding domain"/>
    <property type="match status" value="2"/>
</dbReference>
<dbReference type="Gene3D" id="1.10.150.570">
    <property type="entry name" value="GidA associated domain, C-terminal subdomain"/>
    <property type="match status" value="1"/>
</dbReference>
<dbReference type="Gene3D" id="1.10.10.1800">
    <property type="entry name" value="tRNA uridine 5-carboxymethylaminomethyl modification enzyme MnmG/GidA"/>
    <property type="match status" value="1"/>
</dbReference>
<dbReference type="HAMAP" id="MF_00129">
    <property type="entry name" value="MnmG_GidA"/>
    <property type="match status" value="1"/>
</dbReference>
<dbReference type="InterPro" id="IPR036188">
    <property type="entry name" value="FAD/NAD-bd_sf"/>
</dbReference>
<dbReference type="InterPro" id="IPR049312">
    <property type="entry name" value="GIDA_C_N"/>
</dbReference>
<dbReference type="InterPro" id="IPR004416">
    <property type="entry name" value="MnmG"/>
</dbReference>
<dbReference type="InterPro" id="IPR002218">
    <property type="entry name" value="MnmG-rel"/>
</dbReference>
<dbReference type="InterPro" id="IPR020595">
    <property type="entry name" value="MnmG-rel_CS"/>
</dbReference>
<dbReference type="InterPro" id="IPR026904">
    <property type="entry name" value="MnmG_C"/>
</dbReference>
<dbReference type="InterPro" id="IPR047001">
    <property type="entry name" value="MnmG_C_subdom"/>
</dbReference>
<dbReference type="InterPro" id="IPR044920">
    <property type="entry name" value="MnmG_C_subdom_sf"/>
</dbReference>
<dbReference type="InterPro" id="IPR040131">
    <property type="entry name" value="MnmG_N"/>
</dbReference>
<dbReference type="NCBIfam" id="TIGR00136">
    <property type="entry name" value="mnmG_gidA"/>
    <property type="match status" value="1"/>
</dbReference>
<dbReference type="PANTHER" id="PTHR11806">
    <property type="entry name" value="GLUCOSE INHIBITED DIVISION PROTEIN A"/>
    <property type="match status" value="1"/>
</dbReference>
<dbReference type="PANTHER" id="PTHR11806:SF0">
    <property type="entry name" value="PROTEIN MTO1 HOMOLOG, MITOCHONDRIAL"/>
    <property type="match status" value="1"/>
</dbReference>
<dbReference type="Pfam" id="PF01134">
    <property type="entry name" value="GIDA"/>
    <property type="match status" value="1"/>
</dbReference>
<dbReference type="Pfam" id="PF21680">
    <property type="entry name" value="GIDA_C_1st"/>
    <property type="match status" value="1"/>
</dbReference>
<dbReference type="Pfam" id="PF13932">
    <property type="entry name" value="SAM_GIDA_C"/>
    <property type="match status" value="1"/>
</dbReference>
<dbReference type="SMART" id="SM01228">
    <property type="entry name" value="GIDA_assoc_3"/>
    <property type="match status" value="1"/>
</dbReference>
<dbReference type="SUPFAM" id="SSF51905">
    <property type="entry name" value="FAD/NAD(P)-binding domain"/>
    <property type="match status" value="1"/>
</dbReference>
<dbReference type="PROSITE" id="PS01280">
    <property type="entry name" value="GIDA_1"/>
    <property type="match status" value="1"/>
</dbReference>
<dbReference type="PROSITE" id="PS01281">
    <property type="entry name" value="GIDA_2"/>
    <property type="match status" value="1"/>
</dbReference>
<gene>
    <name evidence="1" type="primary">mnmG</name>
    <name evidence="1" type="synonym">gidA</name>
    <name type="ordered locus">Teth514_2408</name>
</gene>
<sequence length="633" mass="71060">MNFIAGEYDVAVVGLGHAGSEAALACARLGLKTVGFAVNLDSIALMACNPSIGGPAKAQLVREIDALGGEMAINTDKSLLQIRTLNTSKGPAVRSLRAQVDKKLYQMNMKYTLERQENLDIKQAEIVDILVEDNKVTGVVTKLGAIYKCKACIITTGTFLKGRVIIGDVSFDSGPSGLFPANQLSETLKRLGFKLMRFKTGTPARVDKRSIDFSKMEIQPGDEVITPFSYMHDKIEIEQLPCWLTYTNKRTHEIIMANIHRSPLFSGEITGVGVRYCPSIEDKVVKFPHKERHQIFIEPEGLNTYEMYVQGMSSSLPEDVQLEFLRTVPGLENVRVMRPAYAIEYDCIDPTQLKATLESKKIEGLYFAGQVNGTSGYEEAAAQGLMAGINAAMKLLNKPSVILDRSQAYIGVLIDDLVTKGTNEPYRMLTSRAEYRLLLRQDNADFRLTELGYKIGLVTEERYQKFLKKKIQLEKEMRRLLGVMIKPSEEVNNFLISKGSTPLVTGVDLYTLLKRPEIDYKSTKFLDKNRPDDILDSVAEQIDINIKYEGYIMKQLRQVEHFKALENKKIPEDIDYYQIHGLSNEAKEKLTKIRPTSIGQASRISGVSPADISVLLIYMQQLRRNKEDEEQIG</sequence>